<name>NDHM_GLOVI</name>
<sequence>MLKSTTRHVHIFAADIRNDNFIASDTKLTLDVDPDNEFIWNDPALQKVYSEFDRLVAAYTGLALTEYNLRRIGSDLENFIRGLLQQGEIAYNLDSRVLNFSMGRPQVRGPGQIENRPGQ</sequence>
<evidence type="ECO:0000255" key="1">
    <source>
        <dbReference type="HAMAP-Rule" id="MF_01352"/>
    </source>
</evidence>
<keyword id="KW-0997">Cell inner membrane</keyword>
<keyword id="KW-1003">Cell membrane</keyword>
<keyword id="KW-0472">Membrane</keyword>
<keyword id="KW-0520">NAD</keyword>
<keyword id="KW-0521">NADP</keyword>
<keyword id="KW-0618">Plastoquinone</keyword>
<keyword id="KW-0874">Quinone</keyword>
<keyword id="KW-1185">Reference proteome</keyword>
<keyword id="KW-1278">Translocase</keyword>
<keyword id="KW-0813">Transport</keyword>
<organism>
    <name type="scientific">Gloeobacter violaceus (strain ATCC 29082 / PCC 7421)</name>
    <dbReference type="NCBI Taxonomy" id="251221"/>
    <lineage>
        <taxon>Bacteria</taxon>
        <taxon>Bacillati</taxon>
        <taxon>Cyanobacteriota</taxon>
        <taxon>Cyanophyceae</taxon>
        <taxon>Gloeobacterales</taxon>
        <taxon>Gloeobacteraceae</taxon>
        <taxon>Gloeobacter</taxon>
    </lineage>
</organism>
<comment type="function">
    <text evidence="1">NDH-1 shuttles electrons from an unknown electron donor, via FMN and iron-sulfur (Fe-S) centers, to quinones in the respiratory and/or the photosynthetic chain. The immediate electron acceptor for the enzyme in this species is believed to be plastoquinone. Couples the redox reaction to proton translocation, and thus conserves the redox energy in a proton gradient. Cyanobacterial NDH-1 also plays a role in inorganic carbon-concentration.</text>
</comment>
<comment type="catalytic activity">
    <reaction evidence="1">
        <text>a plastoquinone + NADH + (n+1) H(+)(in) = a plastoquinol + NAD(+) + n H(+)(out)</text>
        <dbReference type="Rhea" id="RHEA:42608"/>
        <dbReference type="Rhea" id="RHEA-COMP:9561"/>
        <dbReference type="Rhea" id="RHEA-COMP:9562"/>
        <dbReference type="ChEBI" id="CHEBI:15378"/>
        <dbReference type="ChEBI" id="CHEBI:17757"/>
        <dbReference type="ChEBI" id="CHEBI:57540"/>
        <dbReference type="ChEBI" id="CHEBI:57945"/>
        <dbReference type="ChEBI" id="CHEBI:62192"/>
    </reaction>
</comment>
<comment type="catalytic activity">
    <reaction evidence="1">
        <text>a plastoquinone + NADPH + (n+1) H(+)(in) = a plastoquinol + NADP(+) + n H(+)(out)</text>
        <dbReference type="Rhea" id="RHEA:42612"/>
        <dbReference type="Rhea" id="RHEA-COMP:9561"/>
        <dbReference type="Rhea" id="RHEA-COMP:9562"/>
        <dbReference type="ChEBI" id="CHEBI:15378"/>
        <dbReference type="ChEBI" id="CHEBI:17757"/>
        <dbReference type="ChEBI" id="CHEBI:57783"/>
        <dbReference type="ChEBI" id="CHEBI:58349"/>
        <dbReference type="ChEBI" id="CHEBI:62192"/>
    </reaction>
</comment>
<comment type="subunit">
    <text evidence="1">NDH-1 can be composed of about 15 different subunits; different subcomplexes with different compositions have been identified which probably have different functions.</text>
</comment>
<comment type="subcellular location">
    <subcellularLocation>
        <location evidence="1">Cell inner membrane</location>
        <topology evidence="1">Peripheral membrane protein</topology>
        <orientation evidence="1">Cytoplasmic side</orientation>
    </subcellularLocation>
</comment>
<comment type="similarity">
    <text evidence="1">Belongs to the complex I NdhM subunit family.</text>
</comment>
<gene>
    <name evidence="1" type="primary">ndhM</name>
    <name type="ordered locus">glr1522</name>
</gene>
<proteinExistence type="inferred from homology"/>
<feature type="chain" id="PRO_0000352182" description="NAD(P)H-quinone oxidoreductase subunit M">
    <location>
        <begin position="1"/>
        <end position="119"/>
    </location>
</feature>
<dbReference type="EC" id="7.1.1.-" evidence="1"/>
<dbReference type="EMBL" id="BA000045">
    <property type="protein sequence ID" value="BAC89463.1"/>
    <property type="molecule type" value="Genomic_DNA"/>
</dbReference>
<dbReference type="RefSeq" id="NP_924468.1">
    <property type="nucleotide sequence ID" value="NC_005125.1"/>
</dbReference>
<dbReference type="RefSeq" id="WP_011141521.1">
    <property type="nucleotide sequence ID" value="NC_005125.1"/>
</dbReference>
<dbReference type="SMR" id="Q7NKF6"/>
<dbReference type="STRING" id="251221.gene:10759011"/>
<dbReference type="EnsemblBacteria" id="BAC89463">
    <property type="protein sequence ID" value="BAC89463"/>
    <property type="gene ID" value="BAC89463"/>
</dbReference>
<dbReference type="KEGG" id="gvi:glr1522"/>
<dbReference type="PATRIC" id="fig|251221.4.peg.1556"/>
<dbReference type="eggNOG" id="ENOG5031AQM">
    <property type="taxonomic scope" value="Bacteria"/>
</dbReference>
<dbReference type="HOGENOM" id="CLU_137431_0_0_3"/>
<dbReference type="InParanoid" id="Q7NKF6"/>
<dbReference type="OrthoDB" id="461686at2"/>
<dbReference type="PhylomeDB" id="Q7NKF6"/>
<dbReference type="Proteomes" id="UP000000557">
    <property type="component" value="Chromosome"/>
</dbReference>
<dbReference type="GO" id="GO:0005886">
    <property type="term" value="C:plasma membrane"/>
    <property type="evidence" value="ECO:0007669"/>
    <property type="project" value="UniProtKB-SubCell"/>
</dbReference>
<dbReference type="GO" id="GO:0016655">
    <property type="term" value="F:oxidoreductase activity, acting on NAD(P)H, quinone or similar compound as acceptor"/>
    <property type="evidence" value="ECO:0007669"/>
    <property type="project" value="UniProtKB-UniRule"/>
</dbReference>
<dbReference type="GO" id="GO:0048038">
    <property type="term" value="F:quinone binding"/>
    <property type="evidence" value="ECO:0007669"/>
    <property type="project" value="UniProtKB-KW"/>
</dbReference>
<dbReference type="HAMAP" id="MF_01352">
    <property type="entry name" value="NDH1_NDH1M"/>
    <property type="match status" value="1"/>
</dbReference>
<dbReference type="InterPro" id="IPR018922">
    <property type="entry name" value="NdhM"/>
</dbReference>
<dbReference type="PANTHER" id="PTHR36900">
    <property type="entry name" value="NAD(P)H-QUINONE OXIDOREDUCTASE SUBUNIT M, CHLOROPLASTIC"/>
    <property type="match status" value="1"/>
</dbReference>
<dbReference type="PANTHER" id="PTHR36900:SF1">
    <property type="entry name" value="NAD(P)H-QUINONE OXIDOREDUCTASE SUBUNIT M, CHLOROPLASTIC"/>
    <property type="match status" value="1"/>
</dbReference>
<dbReference type="Pfam" id="PF10664">
    <property type="entry name" value="NdhM"/>
    <property type="match status" value="1"/>
</dbReference>
<protein>
    <recommendedName>
        <fullName evidence="1">NAD(P)H-quinone oxidoreductase subunit M</fullName>
        <ecNumber evidence="1">7.1.1.-</ecNumber>
    </recommendedName>
    <alternativeName>
        <fullName evidence="1">NAD(P)H dehydrogenase I subunit M</fullName>
        <shortName evidence="1">NDH-1 subunit M</shortName>
        <shortName evidence="1">NDH-M</shortName>
    </alternativeName>
</protein>
<accession>Q7NKF6</accession>
<reference key="1">
    <citation type="journal article" date="2003" name="DNA Res.">
        <title>Complete genome structure of Gloeobacter violaceus PCC 7421, a cyanobacterium that lacks thylakoids.</title>
        <authorList>
            <person name="Nakamura Y."/>
            <person name="Kaneko T."/>
            <person name="Sato S."/>
            <person name="Mimuro M."/>
            <person name="Miyashita H."/>
            <person name="Tsuchiya T."/>
            <person name="Sasamoto S."/>
            <person name="Watanabe A."/>
            <person name="Kawashima K."/>
            <person name="Kishida Y."/>
            <person name="Kiyokawa C."/>
            <person name="Kohara M."/>
            <person name="Matsumoto M."/>
            <person name="Matsuno A."/>
            <person name="Nakazaki N."/>
            <person name="Shimpo S."/>
            <person name="Takeuchi C."/>
            <person name="Yamada M."/>
            <person name="Tabata S."/>
        </authorList>
    </citation>
    <scope>NUCLEOTIDE SEQUENCE [LARGE SCALE GENOMIC DNA]</scope>
    <source>
        <strain>ATCC 29082 / PCC 7421</strain>
    </source>
</reference>